<name>UREE_BURMA</name>
<accession>Q62HR9</accession>
<feature type="chain" id="PRO_0000223408" description="Urease accessory protein UreE">
    <location>
        <begin position="1"/>
        <end position="184"/>
    </location>
</feature>
<feature type="region of interest" description="Disordered" evidence="2">
    <location>
        <begin position="147"/>
        <end position="184"/>
    </location>
</feature>
<feature type="compositionally biased region" description="Basic and acidic residues" evidence="2">
    <location>
        <begin position="157"/>
        <end position="171"/>
    </location>
</feature>
<organism>
    <name type="scientific">Burkholderia mallei (strain ATCC 23344)</name>
    <dbReference type="NCBI Taxonomy" id="243160"/>
    <lineage>
        <taxon>Bacteria</taxon>
        <taxon>Pseudomonadati</taxon>
        <taxon>Pseudomonadota</taxon>
        <taxon>Betaproteobacteria</taxon>
        <taxon>Burkholderiales</taxon>
        <taxon>Burkholderiaceae</taxon>
        <taxon>Burkholderia</taxon>
        <taxon>pseudomallei group</taxon>
    </lineage>
</organism>
<proteinExistence type="inferred from homology"/>
<keyword id="KW-0143">Chaperone</keyword>
<keyword id="KW-0963">Cytoplasm</keyword>
<keyword id="KW-0533">Nickel</keyword>
<keyword id="KW-0996">Nickel insertion</keyword>
<keyword id="KW-1185">Reference proteome</keyword>
<reference key="1">
    <citation type="journal article" date="2004" name="Proc. Natl. Acad. Sci. U.S.A.">
        <title>Structural flexibility in the Burkholderia mallei genome.</title>
        <authorList>
            <person name="Nierman W.C."/>
            <person name="DeShazer D."/>
            <person name="Kim H.S."/>
            <person name="Tettelin H."/>
            <person name="Nelson K.E."/>
            <person name="Feldblyum T.V."/>
            <person name="Ulrich R.L."/>
            <person name="Ronning C.M."/>
            <person name="Brinkac L.M."/>
            <person name="Daugherty S.C."/>
            <person name="Davidsen T.D."/>
            <person name="DeBoy R.T."/>
            <person name="Dimitrov G."/>
            <person name="Dodson R.J."/>
            <person name="Durkin A.S."/>
            <person name="Gwinn M.L."/>
            <person name="Haft D.H."/>
            <person name="Khouri H.M."/>
            <person name="Kolonay J.F."/>
            <person name="Madupu R."/>
            <person name="Mohammoud Y."/>
            <person name="Nelson W.C."/>
            <person name="Radune D."/>
            <person name="Romero C.M."/>
            <person name="Sarria S."/>
            <person name="Selengut J."/>
            <person name="Shamblin C."/>
            <person name="Sullivan S.A."/>
            <person name="White O."/>
            <person name="Yu Y."/>
            <person name="Zafar N."/>
            <person name="Zhou L."/>
            <person name="Fraser C.M."/>
        </authorList>
    </citation>
    <scope>NUCLEOTIDE SEQUENCE [LARGE SCALE GENOMIC DNA]</scope>
    <source>
        <strain>ATCC 23344</strain>
    </source>
</reference>
<protein>
    <recommendedName>
        <fullName evidence="1">Urease accessory protein UreE</fullName>
    </recommendedName>
</protein>
<sequence length="184" mass="19871">MRTIDKRIAPNVRLAATLDTGEDVALVLPRGTVLRDGDVLVADDGALVRVAAAHEAVLLVRAPDALTLTRAAYHLGNRHTPVEVGAGCLKLEYDPALADMLTRLGATVERASAPFQPEAGAYGGGHRHGHDATFAEDYALAQQVFDEHHGHSHSHSHSHDHDHDHDHDHQHGPSCSHGHHHGHR</sequence>
<gene>
    <name evidence="1" type="primary">ureE</name>
    <name type="ordered locus">BMA2185</name>
</gene>
<dbReference type="EMBL" id="CP000010">
    <property type="protein sequence ID" value="AAU50298.1"/>
    <property type="molecule type" value="Genomic_DNA"/>
</dbReference>
<dbReference type="RefSeq" id="WP_004194963.1">
    <property type="nucleotide sequence ID" value="NC_006348.1"/>
</dbReference>
<dbReference type="RefSeq" id="YP_103751.1">
    <property type="nucleotide sequence ID" value="NC_006348.1"/>
</dbReference>
<dbReference type="SMR" id="Q62HR9"/>
<dbReference type="GeneID" id="92979888"/>
<dbReference type="KEGG" id="bma:BMA2185"/>
<dbReference type="PATRIC" id="fig|243160.12.peg.2254"/>
<dbReference type="eggNOG" id="COG2371">
    <property type="taxonomic scope" value="Bacteria"/>
</dbReference>
<dbReference type="HOGENOM" id="CLU_093757_2_0_4"/>
<dbReference type="Proteomes" id="UP000006693">
    <property type="component" value="Chromosome 1"/>
</dbReference>
<dbReference type="GO" id="GO:0005737">
    <property type="term" value="C:cytoplasm"/>
    <property type="evidence" value="ECO:0007669"/>
    <property type="project" value="UniProtKB-SubCell"/>
</dbReference>
<dbReference type="GO" id="GO:0016151">
    <property type="term" value="F:nickel cation binding"/>
    <property type="evidence" value="ECO:0007669"/>
    <property type="project" value="UniProtKB-UniRule"/>
</dbReference>
<dbReference type="GO" id="GO:0051082">
    <property type="term" value="F:unfolded protein binding"/>
    <property type="evidence" value="ECO:0007669"/>
    <property type="project" value="UniProtKB-UniRule"/>
</dbReference>
<dbReference type="GO" id="GO:0006457">
    <property type="term" value="P:protein folding"/>
    <property type="evidence" value="ECO:0007669"/>
    <property type="project" value="InterPro"/>
</dbReference>
<dbReference type="GO" id="GO:0065003">
    <property type="term" value="P:protein-containing complex assembly"/>
    <property type="evidence" value="ECO:0007669"/>
    <property type="project" value="InterPro"/>
</dbReference>
<dbReference type="GO" id="GO:0019627">
    <property type="term" value="P:urea metabolic process"/>
    <property type="evidence" value="ECO:0007669"/>
    <property type="project" value="InterPro"/>
</dbReference>
<dbReference type="CDD" id="cd00571">
    <property type="entry name" value="UreE"/>
    <property type="match status" value="1"/>
</dbReference>
<dbReference type="Gene3D" id="2.60.260.20">
    <property type="entry name" value="Urease metallochaperone UreE, N-terminal domain"/>
    <property type="match status" value="1"/>
</dbReference>
<dbReference type="Gene3D" id="3.30.70.790">
    <property type="entry name" value="UreE, C-terminal domain"/>
    <property type="match status" value="1"/>
</dbReference>
<dbReference type="HAMAP" id="MF_00822">
    <property type="entry name" value="UreE"/>
    <property type="match status" value="1"/>
</dbReference>
<dbReference type="InterPro" id="IPR012406">
    <property type="entry name" value="UreE"/>
</dbReference>
<dbReference type="InterPro" id="IPR007864">
    <property type="entry name" value="UreE_C_dom"/>
</dbReference>
<dbReference type="InterPro" id="IPR004029">
    <property type="entry name" value="UreE_N"/>
</dbReference>
<dbReference type="InterPro" id="IPR036118">
    <property type="entry name" value="UreE_N_sf"/>
</dbReference>
<dbReference type="NCBIfam" id="NF009751">
    <property type="entry name" value="PRK13261.1-1"/>
    <property type="match status" value="1"/>
</dbReference>
<dbReference type="NCBIfam" id="NF009762">
    <property type="entry name" value="PRK13263.1"/>
    <property type="match status" value="1"/>
</dbReference>
<dbReference type="Pfam" id="PF05194">
    <property type="entry name" value="UreE_C"/>
    <property type="match status" value="1"/>
</dbReference>
<dbReference type="Pfam" id="PF02814">
    <property type="entry name" value="UreE_N"/>
    <property type="match status" value="1"/>
</dbReference>
<dbReference type="SMART" id="SM00988">
    <property type="entry name" value="UreE_N"/>
    <property type="match status" value="1"/>
</dbReference>
<dbReference type="SUPFAM" id="SSF69737">
    <property type="entry name" value="Urease metallochaperone UreE, C-terminal domain"/>
    <property type="match status" value="1"/>
</dbReference>
<dbReference type="SUPFAM" id="SSF69287">
    <property type="entry name" value="Urease metallochaperone UreE, N-terminal domain"/>
    <property type="match status" value="1"/>
</dbReference>
<evidence type="ECO:0000255" key="1">
    <source>
        <dbReference type="HAMAP-Rule" id="MF_00822"/>
    </source>
</evidence>
<evidence type="ECO:0000256" key="2">
    <source>
        <dbReference type="SAM" id="MobiDB-lite"/>
    </source>
</evidence>
<comment type="function">
    <text evidence="1">Involved in urease metallocenter assembly. Binds nickel. Probably functions as a nickel donor during metallocenter assembly.</text>
</comment>
<comment type="subcellular location">
    <subcellularLocation>
        <location evidence="1">Cytoplasm</location>
    </subcellularLocation>
</comment>
<comment type="similarity">
    <text evidence="1">Belongs to the UreE family.</text>
</comment>